<feature type="chain" id="PRO_1000009401" description="Leucine--tRNA ligase">
    <location>
        <begin position="1"/>
        <end position="868"/>
    </location>
</feature>
<feature type="short sequence motif" description="'HIGH' region">
    <location>
        <begin position="42"/>
        <end position="52"/>
    </location>
</feature>
<feature type="short sequence motif" description="'KMSKS' region">
    <location>
        <begin position="627"/>
        <end position="631"/>
    </location>
</feature>
<feature type="binding site" evidence="1">
    <location>
        <position position="630"/>
    </location>
    <ligand>
        <name>ATP</name>
        <dbReference type="ChEBI" id="CHEBI:30616"/>
    </ligand>
</feature>
<keyword id="KW-0030">Aminoacyl-tRNA synthetase</keyword>
<keyword id="KW-0067">ATP-binding</keyword>
<keyword id="KW-0963">Cytoplasm</keyword>
<keyword id="KW-0436">Ligase</keyword>
<keyword id="KW-0547">Nucleotide-binding</keyword>
<keyword id="KW-0648">Protein biosynthesis</keyword>
<protein>
    <recommendedName>
        <fullName evidence="1">Leucine--tRNA ligase</fullName>
        <ecNumber evidence="1">6.1.1.4</ecNumber>
    </recommendedName>
    <alternativeName>
        <fullName evidence="1">Leucyl-tRNA synthetase</fullName>
        <shortName evidence="1">LeuRS</shortName>
    </alternativeName>
</protein>
<sequence length="868" mass="96923">MHELYQPREIEAAAQTFWDEQKSFEVSEQPGKDTFYCLSMFPYPSGKLHMGHVRNYTIGDVISRYQRMLGKNVLQPLGWDAFGMPAENAAIDNNVAPAKWTYENIDYMKTQLKSLGLAVDWSREVTTCKPDYYRWEQWLFTRLFEKGVIYRKNGTVNWDPIDQTVLANEQVIDGRGWRSGALIEKREIPMYYFKITAYADELLESLDELPGWPEQVKTMQRNWIGRSRGMEVQFPYDQASIGEAGALKVFTTRPDTLMGATYVAVAAEHPLATLAAQGNPALQAFIDECKGGSVAEADVATQEKKGQATSLFVEHPLTGEKLPVWVANYVLMHYGDGAVMAVPAHDERDFEFATQYGLPIKPVVRTSAGDQTPAPWQPAYGEHGELINSGEFTGLTFQDAFDAIEAALVKKSLGQSRTQFRLRDWGISRQRYWGCPIPIVHCDTCGDVPVPEDQLPVVLPEDVVPDGAGSPLARMPEFYECSCPKCGAPAKRETDTMDTFVESSWYYARYASPHYEGGLVEPNAANHWLPVDQYIGGIEHAILHLLYARFFHKLMRDEGLVTSNEPFKNLLTQGMVNAETYFRMETSGKKTWINPADVTLERDAKAKVISARLTSDGLPVEIGGTEKMSKSKKNGIDPQTMIDQYGADTCRLFMMFASPPDMSLEWSDSGVEGSHRFLRRVWRLAQAHVTQGPSTGLDVAALSDEQKAIRRAIHQAIRQASQDIGQNQKFNTAVAQVMTLMNVLEKAPQDTPQDRALMQEGVETVALLLAPITPHISHELWKQLGHNEPVIDAGWPAFDASALVQDSLQLVIQVNGKLRGHIEMPASASREEVEAAARVNENVLRFTDGLTIRKVIVVPGKLVNIVAS</sequence>
<evidence type="ECO:0000255" key="1">
    <source>
        <dbReference type="HAMAP-Rule" id="MF_00049"/>
    </source>
</evidence>
<proteinExistence type="inferred from homology"/>
<dbReference type="EC" id="6.1.1.4" evidence="1"/>
<dbReference type="EMBL" id="CP000075">
    <property type="protein sequence ID" value="AAY39382.1"/>
    <property type="molecule type" value="Genomic_DNA"/>
</dbReference>
<dbReference type="RefSeq" id="WP_011268980.1">
    <property type="nucleotide sequence ID" value="NC_007005.1"/>
</dbReference>
<dbReference type="RefSeq" id="YP_237420.1">
    <property type="nucleotide sequence ID" value="NC_007005.1"/>
</dbReference>
<dbReference type="SMR" id="Q4ZN90"/>
<dbReference type="STRING" id="205918.Psyr_4352"/>
<dbReference type="KEGG" id="psb:Psyr_4352"/>
<dbReference type="PATRIC" id="fig|205918.7.peg.4492"/>
<dbReference type="eggNOG" id="COG0495">
    <property type="taxonomic scope" value="Bacteria"/>
</dbReference>
<dbReference type="HOGENOM" id="CLU_004427_0_0_6"/>
<dbReference type="OrthoDB" id="9810365at2"/>
<dbReference type="Proteomes" id="UP000000426">
    <property type="component" value="Chromosome"/>
</dbReference>
<dbReference type="GO" id="GO:0005829">
    <property type="term" value="C:cytosol"/>
    <property type="evidence" value="ECO:0007669"/>
    <property type="project" value="TreeGrafter"/>
</dbReference>
<dbReference type="GO" id="GO:0002161">
    <property type="term" value="F:aminoacyl-tRNA deacylase activity"/>
    <property type="evidence" value="ECO:0007669"/>
    <property type="project" value="InterPro"/>
</dbReference>
<dbReference type="GO" id="GO:0005524">
    <property type="term" value="F:ATP binding"/>
    <property type="evidence" value="ECO:0007669"/>
    <property type="project" value="UniProtKB-UniRule"/>
</dbReference>
<dbReference type="GO" id="GO:0004823">
    <property type="term" value="F:leucine-tRNA ligase activity"/>
    <property type="evidence" value="ECO:0007669"/>
    <property type="project" value="UniProtKB-UniRule"/>
</dbReference>
<dbReference type="GO" id="GO:0006429">
    <property type="term" value="P:leucyl-tRNA aminoacylation"/>
    <property type="evidence" value="ECO:0007669"/>
    <property type="project" value="UniProtKB-UniRule"/>
</dbReference>
<dbReference type="CDD" id="cd07958">
    <property type="entry name" value="Anticodon_Ia_Leu_BEm"/>
    <property type="match status" value="1"/>
</dbReference>
<dbReference type="CDD" id="cd00812">
    <property type="entry name" value="LeuRS_core"/>
    <property type="match status" value="1"/>
</dbReference>
<dbReference type="FunFam" id="1.10.730.10:FF:000003">
    <property type="entry name" value="Leucine--tRNA ligase"/>
    <property type="match status" value="1"/>
</dbReference>
<dbReference type="FunFam" id="2.20.28.290:FF:000001">
    <property type="entry name" value="Leucine--tRNA ligase"/>
    <property type="match status" value="1"/>
</dbReference>
<dbReference type="FunFam" id="3.10.20.590:FF:000001">
    <property type="entry name" value="Leucine--tRNA ligase"/>
    <property type="match status" value="1"/>
</dbReference>
<dbReference type="FunFam" id="3.40.50.620:FF:000003">
    <property type="entry name" value="Leucine--tRNA ligase"/>
    <property type="match status" value="1"/>
</dbReference>
<dbReference type="FunFam" id="3.40.50.620:FF:000124">
    <property type="entry name" value="Leucine--tRNA ligase"/>
    <property type="match status" value="1"/>
</dbReference>
<dbReference type="FunFam" id="3.90.740.10:FF:000012">
    <property type="entry name" value="Leucine--tRNA ligase"/>
    <property type="match status" value="1"/>
</dbReference>
<dbReference type="Gene3D" id="2.20.28.290">
    <property type="match status" value="1"/>
</dbReference>
<dbReference type="Gene3D" id="3.10.20.590">
    <property type="match status" value="1"/>
</dbReference>
<dbReference type="Gene3D" id="3.40.50.620">
    <property type="entry name" value="HUPs"/>
    <property type="match status" value="2"/>
</dbReference>
<dbReference type="Gene3D" id="1.10.730.10">
    <property type="entry name" value="Isoleucyl-tRNA Synthetase, Domain 1"/>
    <property type="match status" value="1"/>
</dbReference>
<dbReference type="HAMAP" id="MF_00049_B">
    <property type="entry name" value="Leu_tRNA_synth_B"/>
    <property type="match status" value="1"/>
</dbReference>
<dbReference type="InterPro" id="IPR001412">
    <property type="entry name" value="aa-tRNA-synth_I_CS"/>
</dbReference>
<dbReference type="InterPro" id="IPR002300">
    <property type="entry name" value="aa-tRNA-synth_Ia"/>
</dbReference>
<dbReference type="InterPro" id="IPR002302">
    <property type="entry name" value="Leu-tRNA-ligase"/>
</dbReference>
<dbReference type="InterPro" id="IPR025709">
    <property type="entry name" value="Leu_tRNA-synth_edit"/>
</dbReference>
<dbReference type="InterPro" id="IPR013155">
    <property type="entry name" value="M/V/L/I-tRNA-synth_anticd-bd"/>
</dbReference>
<dbReference type="InterPro" id="IPR015413">
    <property type="entry name" value="Methionyl/Leucyl_tRNA_Synth"/>
</dbReference>
<dbReference type="InterPro" id="IPR014729">
    <property type="entry name" value="Rossmann-like_a/b/a_fold"/>
</dbReference>
<dbReference type="InterPro" id="IPR009080">
    <property type="entry name" value="tRNAsynth_Ia_anticodon-bd"/>
</dbReference>
<dbReference type="InterPro" id="IPR009008">
    <property type="entry name" value="Val/Leu/Ile-tRNA-synth_edit"/>
</dbReference>
<dbReference type="NCBIfam" id="TIGR00396">
    <property type="entry name" value="leuS_bact"/>
    <property type="match status" value="1"/>
</dbReference>
<dbReference type="PANTHER" id="PTHR43740:SF2">
    <property type="entry name" value="LEUCINE--TRNA LIGASE, MITOCHONDRIAL"/>
    <property type="match status" value="1"/>
</dbReference>
<dbReference type="PANTHER" id="PTHR43740">
    <property type="entry name" value="LEUCYL-TRNA SYNTHETASE"/>
    <property type="match status" value="1"/>
</dbReference>
<dbReference type="Pfam" id="PF08264">
    <property type="entry name" value="Anticodon_1"/>
    <property type="match status" value="1"/>
</dbReference>
<dbReference type="Pfam" id="PF00133">
    <property type="entry name" value="tRNA-synt_1"/>
    <property type="match status" value="2"/>
</dbReference>
<dbReference type="Pfam" id="PF13603">
    <property type="entry name" value="tRNA-synt_1_2"/>
    <property type="match status" value="1"/>
</dbReference>
<dbReference type="Pfam" id="PF09334">
    <property type="entry name" value="tRNA-synt_1g"/>
    <property type="match status" value="1"/>
</dbReference>
<dbReference type="PRINTS" id="PR00985">
    <property type="entry name" value="TRNASYNTHLEU"/>
</dbReference>
<dbReference type="SUPFAM" id="SSF47323">
    <property type="entry name" value="Anticodon-binding domain of a subclass of class I aminoacyl-tRNA synthetases"/>
    <property type="match status" value="1"/>
</dbReference>
<dbReference type="SUPFAM" id="SSF52374">
    <property type="entry name" value="Nucleotidylyl transferase"/>
    <property type="match status" value="1"/>
</dbReference>
<dbReference type="SUPFAM" id="SSF50677">
    <property type="entry name" value="ValRS/IleRS/LeuRS editing domain"/>
    <property type="match status" value="1"/>
</dbReference>
<dbReference type="PROSITE" id="PS00178">
    <property type="entry name" value="AA_TRNA_LIGASE_I"/>
    <property type="match status" value="1"/>
</dbReference>
<gene>
    <name evidence="1" type="primary">leuS</name>
    <name type="ordered locus">Psyr_4352</name>
</gene>
<organism>
    <name type="scientific">Pseudomonas syringae pv. syringae (strain B728a)</name>
    <dbReference type="NCBI Taxonomy" id="205918"/>
    <lineage>
        <taxon>Bacteria</taxon>
        <taxon>Pseudomonadati</taxon>
        <taxon>Pseudomonadota</taxon>
        <taxon>Gammaproteobacteria</taxon>
        <taxon>Pseudomonadales</taxon>
        <taxon>Pseudomonadaceae</taxon>
        <taxon>Pseudomonas</taxon>
        <taxon>Pseudomonas syringae</taxon>
    </lineage>
</organism>
<comment type="catalytic activity">
    <reaction evidence="1">
        <text>tRNA(Leu) + L-leucine + ATP = L-leucyl-tRNA(Leu) + AMP + diphosphate</text>
        <dbReference type="Rhea" id="RHEA:11688"/>
        <dbReference type="Rhea" id="RHEA-COMP:9613"/>
        <dbReference type="Rhea" id="RHEA-COMP:9622"/>
        <dbReference type="ChEBI" id="CHEBI:30616"/>
        <dbReference type="ChEBI" id="CHEBI:33019"/>
        <dbReference type="ChEBI" id="CHEBI:57427"/>
        <dbReference type="ChEBI" id="CHEBI:78442"/>
        <dbReference type="ChEBI" id="CHEBI:78494"/>
        <dbReference type="ChEBI" id="CHEBI:456215"/>
        <dbReference type="EC" id="6.1.1.4"/>
    </reaction>
</comment>
<comment type="subcellular location">
    <subcellularLocation>
        <location evidence="1">Cytoplasm</location>
    </subcellularLocation>
</comment>
<comment type="similarity">
    <text evidence="1">Belongs to the class-I aminoacyl-tRNA synthetase family.</text>
</comment>
<accession>Q4ZN90</accession>
<reference key="1">
    <citation type="journal article" date="2005" name="Proc. Natl. Acad. Sci. U.S.A.">
        <title>Comparison of the complete genome sequences of Pseudomonas syringae pv. syringae B728a and pv. tomato DC3000.</title>
        <authorList>
            <person name="Feil H."/>
            <person name="Feil W.S."/>
            <person name="Chain P."/>
            <person name="Larimer F."/>
            <person name="Dibartolo G."/>
            <person name="Copeland A."/>
            <person name="Lykidis A."/>
            <person name="Trong S."/>
            <person name="Nolan M."/>
            <person name="Goltsman E."/>
            <person name="Thiel J."/>
            <person name="Malfatti S."/>
            <person name="Loper J.E."/>
            <person name="Lapidus A."/>
            <person name="Detter J.C."/>
            <person name="Land M."/>
            <person name="Richardson P.M."/>
            <person name="Kyrpides N.C."/>
            <person name="Ivanova N."/>
            <person name="Lindow S.E."/>
        </authorList>
    </citation>
    <scope>NUCLEOTIDE SEQUENCE [LARGE SCALE GENOMIC DNA]</scope>
    <source>
        <strain>B728a</strain>
    </source>
</reference>
<name>SYL_PSEU2</name>